<feature type="chain" id="PRO_0000240096" description="NADH-quinone oxidoreductase subunit H">
    <location>
        <begin position="1"/>
        <end position="330"/>
    </location>
</feature>
<feature type="transmembrane region" description="Helical" evidence="1">
    <location>
        <begin position="5"/>
        <end position="25"/>
    </location>
</feature>
<feature type="transmembrane region" description="Helical" evidence="1">
    <location>
        <begin position="78"/>
        <end position="98"/>
    </location>
</feature>
<feature type="transmembrane region" description="Helical" evidence="1">
    <location>
        <begin position="120"/>
        <end position="140"/>
    </location>
</feature>
<feature type="transmembrane region" description="Helical" evidence="1">
    <location>
        <begin position="155"/>
        <end position="175"/>
    </location>
</feature>
<feature type="transmembrane region" description="Helical" evidence="1">
    <location>
        <begin position="191"/>
        <end position="211"/>
    </location>
</feature>
<feature type="transmembrane region" description="Helical" evidence="1">
    <location>
        <begin position="243"/>
        <end position="263"/>
    </location>
</feature>
<feature type="transmembrane region" description="Helical" evidence="1">
    <location>
        <begin position="271"/>
        <end position="291"/>
    </location>
</feature>
<feature type="transmembrane region" description="Helical" evidence="1">
    <location>
        <begin position="308"/>
        <end position="328"/>
    </location>
</feature>
<accession>Q3A821</accession>
<sequence length="330" mass="36630">MNDTLLTLILIVIKLGLVLGTVLTLAAYMVLAERKILGRMQMRYGPNRVGWGGMLQPLADLIKLLCKEDLIPQRADRWVFMLAPAISTITALLAFAVIPFGAPLQLFDRSLPMVICDLNIGLLYLFALSSLAVYGVALGGWASHSKYALLGGLRAMAQMISYELAMGLAIVPVVMTARSFSLTAIVEAQQSLPNMLRHPLAFFIFLVAIMAESKRTPFDMPEAENELVAGFHTEYSGMRFGMFFVGEYLNLIVLGSMLTVLFLGGWYGPLLPGICWFLIKVLGVAFFFIWVRGTMPRLRYDQLMAFGWKILVPLGLLNILVTAAWLIWRG</sequence>
<dbReference type="EC" id="7.1.1.-" evidence="1"/>
<dbReference type="EMBL" id="CP000142">
    <property type="protein sequence ID" value="ABA87471.1"/>
    <property type="molecule type" value="Genomic_DNA"/>
</dbReference>
<dbReference type="RefSeq" id="WP_011339871.1">
    <property type="nucleotide sequence ID" value="NC_007498.2"/>
</dbReference>
<dbReference type="SMR" id="Q3A821"/>
<dbReference type="STRING" id="338963.Pcar_0210"/>
<dbReference type="KEGG" id="pca:Pcar_0210"/>
<dbReference type="eggNOG" id="COG1005">
    <property type="taxonomic scope" value="Bacteria"/>
</dbReference>
<dbReference type="HOGENOM" id="CLU_015134_0_1_7"/>
<dbReference type="OrthoDB" id="9803734at2"/>
<dbReference type="Proteomes" id="UP000002534">
    <property type="component" value="Chromosome"/>
</dbReference>
<dbReference type="GO" id="GO:0005886">
    <property type="term" value="C:plasma membrane"/>
    <property type="evidence" value="ECO:0007669"/>
    <property type="project" value="UniProtKB-SubCell"/>
</dbReference>
<dbReference type="GO" id="GO:0003954">
    <property type="term" value="F:NADH dehydrogenase activity"/>
    <property type="evidence" value="ECO:0007669"/>
    <property type="project" value="TreeGrafter"/>
</dbReference>
<dbReference type="GO" id="GO:0016655">
    <property type="term" value="F:oxidoreductase activity, acting on NAD(P)H, quinone or similar compound as acceptor"/>
    <property type="evidence" value="ECO:0007669"/>
    <property type="project" value="UniProtKB-UniRule"/>
</dbReference>
<dbReference type="GO" id="GO:0048038">
    <property type="term" value="F:quinone binding"/>
    <property type="evidence" value="ECO:0007669"/>
    <property type="project" value="UniProtKB-KW"/>
</dbReference>
<dbReference type="GO" id="GO:0009060">
    <property type="term" value="P:aerobic respiration"/>
    <property type="evidence" value="ECO:0007669"/>
    <property type="project" value="TreeGrafter"/>
</dbReference>
<dbReference type="HAMAP" id="MF_01350">
    <property type="entry name" value="NDH1_NuoH"/>
    <property type="match status" value="1"/>
</dbReference>
<dbReference type="InterPro" id="IPR001694">
    <property type="entry name" value="NADH_UbQ_OxRdtase_su1/FPO"/>
</dbReference>
<dbReference type="InterPro" id="IPR018086">
    <property type="entry name" value="NADH_UbQ_OxRdtase_su1_CS"/>
</dbReference>
<dbReference type="NCBIfam" id="NF004741">
    <property type="entry name" value="PRK06076.1-2"/>
    <property type="match status" value="1"/>
</dbReference>
<dbReference type="PANTHER" id="PTHR11432">
    <property type="entry name" value="NADH DEHYDROGENASE SUBUNIT 1"/>
    <property type="match status" value="1"/>
</dbReference>
<dbReference type="PANTHER" id="PTHR11432:SF3">
    <property type="entry name" value="NADH-UBIQUINONE OXIDOREDUCTASE CHAIN 1"/>
    <property type="match status" value="1"/>
</dbReference>
<dbReference type="Pfam" id="PF00146">
    <property type="entry name" value="NADHdh"/>
    <property type="match status" value="1"/>
</dbReference>
<dbReference type="PROSITE" id="PS00668">
    <property type="entry name" value="COMPLEX1_ND1_2"/>
    <property type="match status" value="1"/>
</dbReference>
<gene>
    <name evidence="1" type="primary">nuoH</name>
    <name type="ordered locus">Pcar_0210</name>
</gene>
<evidence type="ECO:0000255" key="1">
    <source>
        <dbReference type="HAMAP-Rule" id="MF_01350"/>
    </source>
</evidence>
<name>NUOH_SYNC1</name>
<proteinExistence type="inferred from homology"/>
<comment type="function">
    <text evidence="1">NDH-1 shuttles electrons from NADH, via FMN and iron-sulfur (Fe-S) centers, to quinones in the respiratory chain. The immediate electron acceptor for the enzyme in this species is believed to be ubiquinone. Couples the redox reaction to proton translocation (for every two electrons transferred, four hydrogen ions are translocated across the cytoplasmic membrane), and thus conserves the redox energy in a proton gradient. This subunit may bind ubiquinone.</text>
</comment>
<comment type="catalytic activity">
    <reaction evidence="1">
        <text>a quinone + NADH + 5 H(+)(in) = a quinol + NAD(+) + 4 H(+)(out)</text>
        <dbReference type="Rhea" id="RHEA:57888"/>
        <dbReference type="ChEBI" id="CHEBI:15378"/>
        <dbReference type="ChEBI" id="CHEBI:24646"/>
        <dbReference type="ChEBI" id="CHEBI:57540"/>
        <dbReference type="ChEBI" id="CHEBI:57945"/>
        <dbReference type="ChEBI" id="CHEBI:132124"/>
    </reaction>
</comment>
<comment type="subunit">
    <text evidence="1">NDH-1 is composed of 14 different subunits. Subunits NuoA, H, J, K, L, M, N constitute the membrane sector of the complex.</text>
</comment>
<comment type="subcellular location">
    <subcellularLocation>
        <location evidence="1">Cell inner membrane</location>
        <topology evidence="1">Multi-pass membrane protein</topology>
    </subcellularLocation>
</comment>
<comment type="similarity">
    <text evidence="1">Belongs to the complex I subunit 1 family.</text>
</comment>
<keyword id="KW-0997">Cell inner membrane</keyword>
<keyword id="KW-1003">Cell membrane</keyword>
<keyword id="KW-0472">Membrane</keyword>
<keyword id="KW-0520">NAD</keyword>
<keyword id="KW-0874">Quinone</keyword>
<keyword id="KW-1185">Reference proteome</keyword>
<keyword id="KW-1278">Translocase</keyword>
<keyword id="KW-0812">Transmembrane</keyword>
<keyword id="KW-1133">Transmembrane helix</keyword>
<keyword id="KW-0830">Ubiquinone</keyword>
<organism>
    <name type="scientific">Syntrophotalea carbinolica (strain DSM 2380 / NBRC 103641 / GraBd1)</name>
    <name type="common">Pelobacter carbinolicus</name>
    <dbReference type="NCBI Taxonomy" id="338963"/>
    <lineage>
        <taxon>Bacteria</taxon>
        <taxon>Pseudomonadati</taxon>
        <taxon>Thermodesulfobacteriota</taxon>
        <taxon>Desulfuromonadia</taxon>
        <taxon>Desulfuromonadales</taxon>
        <taxon>Syntrophotaleaceae</taxon>
        <taxon>Syntrophotalea</taxon>
    </lineage>
</organism>
<reference key="1">
    <citation type="submission" date="2005-10" db="EMBL/GenBank/DDBJ databases">
        <title>Complete sequence of Pelobacter carbinolicus DSM 2380.</title>
        <authorList>
            <person name="Copeland A."/>
            <person name="Lucas S."/>
            <person name="Lapidus A."/>
            <person name="Barry K."/>
            <person name="Detter J.C."/>
            <person name="Glavina T."/>
            <person name="Hammon N."/>
            <person name="Israni S."/>
            <person name="Pitluck S."/>
            <person name="Chertkov O."/>
            <person name="Schmutz J."/>
            <person name="Larimer F."/>
            <person name="Land M."/>
            <person name="Kyrpides N."/>
            <person name="Ivanova N."/>
            <person name="Richardson P."/>
        </authorList>
    </citation>
    <scope>NUCLEOTIDE SEQUENCE [LARGE SCALE GENOMIC DNA]</scope>
    <source>
        <strain>DSM 2380 / NBRC 103641 / GraBd1</strain>
    </source>
</reference>
<protein>
    <recommendedName>
        <fullName evidence="1">NADH-quinone oxidoreductase subunit H</fullName>
        <ecNumber evidence="1">7.1.1.-</ecNumber>
    </recommendedName>
    <alternativeName>
        <fullName evidence="1">NADH dehydrogenase I subunit H</fullName>
    </alternativeName>
    <alternativeName>
        <fullName evidence="1">NDH-1 subunit H</fullName>
    </alternativeName>
</protein>